<accession>A0A0H2XLA2</accession>
<sequence>MIKSLFAVIIGGSVGCTLRWLLSTRFNSLFPNLPPGTLVVNLLAGLIIGTALAYFLRQPHLDPFWKLMITTGLCGGLSTFSTFSVEVFALLQAGNYIWALTSVLVHVIGSLIMTALGFFIITILFA</sequence>
<protein>
    <recommendedName>
        <fullName evidence="1 3">Fluoride-specific ion channel FluC</fullName>
    </recommendedName>
</protein>
<dbReference type="EMBL" id="DQ381420">
    <property type="protein sequence ID" value="ABD51745.1"/>
    <property type="molecule type" value="Genomic_DNA"/>
</dbReference>
<dbReference type="RefSeq" id="WP_001318207.1">
    <property type="nucleotide sequence ID" value="NZ_CADILS010000081.1"/>
</dbReference>
<dbReference type="SMR" id="A0A0H2XLA2"/>
<dbReference type="KEGG" id="ecv:APECO1_O1CoBM174"/>
<dbReference type="HOGENOM" id="CLU_114342_3_3_6"/>
<dbReference type="Proteomes" id="UP000008216">
    <property type="component" value="Plasmid pAPEC-O1-ColBM"/>
</dbReference>
<dbReference type="GO" id="GO:0005886">
    <property type="term" value="C:plasma membrane"/>
    <property type="evidence" value="ECO:0007669"/>
    <property type="project" value="UniProtKB-SubCell"/>
</dbReference>
<dbReference type="GO" id="GO:0062054">
    <property type="term" value="F:fluoride channel activity"/>
    <property type="evidence" value="ECO:0007669"/>
    <property type="project" value="UniProtKB-UniRule"/>
</dbReference>
<dbReference type="GO" id="GO:0046872">
    <property type="term" value="F:metal ion binding"/>
    <property type="evidence" value="ECO:0007669"/>
    <property type="project" value="UniProtKB-KW"/>
</dbReference>
<dbReference type="GO" id="GO:0140114">
    <property type="term" value="P:cellular detoxification of fluoride"/>
    <property type="evidence" value="ECO:0007669"/>
    <property type="project" value="UniProtKB-UniRule"/>
</dbReference>
<dbReference type="HAMAP" id="MF_00454">
    <property type="entry name" value="FluC"/>
    <property type="match status" value="1"/>
</dbReference>
<dbReference type="InterPro" id="IPR003691">
    <property type="entry name" value="FluC"/>
</dbReference>
<dbReference type="NCBIfam" id="TIGR00494">
    <property type="entry name" value="crcB"/>
    <property type="match status" value="1"/>
</dbReference>
<dbReference type="NCBIfam" id="NF010792">
    <property type="entry name" value="PRK14196.1"/>
    <property type="match status" value="1"/>
</dbReference>
<dbReference type="PANTHER" id="PTHR28259">
    <property type="entry name" value="FLUORIDE EXPORT PROTEIN 1-RELATED"/>
    <property type="match status" value="1"/>
</dbReference>
<dbReference type="PANTHER" id="PTHR28259:SF1">
    <property type="entry name" value="FLUORIDE EXPORT PROTEIN 1-RELATED"/>
    <property type="match status" value="1"/>
</dbReference>
<dbReference type="Pfam" id="PF02537">
    <property type="entry name" value="CRCB"/>
    <property type="match status" value="1"/>
</dbReference>
<keyword id="KW-0997">Cell inner membrane</keyword>
<keyword id="KW-1003">Cell membrane</keyword>
<keyword id="KW-0407">Ion channel</keyword>
<keyword id="KW-0406">Ion transport</keyword>
<keyword id="KW-0472">Membrane</keyword>
<keyword id="KW-0479">Metal-binding</keyword>
<keyword id="KW-0614">Plasmid</keyword>
<keyword id="KW-1185">Reference proteome</keyword>
<keyword id="KW-0915">Sodium</keyword>
<keyword id="KW-0812">Transmembrane</keyword>
<keyword id="KW-1133">Transmembrane helix</keyword>
<keyword id="KW-0813">Transport</keyword>
<gene>
    <name evidence="1 3" type="primary">fluC</name>
    <name evidence="6" type="synonym">crcB</name>
    <name evidence="4" type="ordered locus">Ecok1_ColBM_46740</name>
    <name evidence="6" type="ORF">APECO1_O1CoBM174</name>
</gene>
<reference key="1">
    <citation type="journal article" date="2006" name="J. Bacteriol.">
        <title>Complete DNA sequence of a ColBM plasmid from avian pathogenic Escherichia coli suggests that it evolved from closely related ColV virulence plasmids.</title>
        <authorList>
            <person name="Johnson T.J."/>
            <person name="Johnson S.J."/>
            <person name="Nolan L.K."/>
        </authorList>
    </citation>
    <scope>NUCLEOTIDE SEQUENCE [LARGE SCALE GENOMIC DNA]</scope>
</reference>
<reference key="2">
    <citation type="journal article" date="2013" name="Elife">
        <title>A family of fluoride-specific ion channels with dual-topology architecture.</title>
        <authorList>
            <person name="Stockbridge R.B."/>
            <person name="Robertson J.L."/>
            <person name="Kolmakova-Partensky L."/>
            <person name="Miller C."/>
        </authorList>
    </citation>
    <scope>FUNCTION</scope>
    <scope>TRANSPORTER ACTIVITY</scope>
    <scope>SUBUNIT</scope>
    <scope>SUBCELLULAR LOCATION</scope>
    <scope>TOPOLOGY</scope>
    <scope>NOMENCLATURE</scope>
</reference>
<feature type="chain" id="PRO_0000458415" description="Fluoride-specific ion channel FluC">
    <location>
        <begin position="1"/>
        <end position="126"/>
    </location>
</feature>
<feature type="transmembrane region" description="Helical" evidence="1">
    <location>
        <begin position="2"/>
        <end position="22"/>
    </location>
</feature>
<feature type="transmembrane region" description="Helical" evidence="1">
    <location>
        <begin position="36"/>
        <end position="56"/>
    </location>
</feature>
<feature type="transmembrane region" description="Helical" evidence="1">
    <location>
        <begin position="80"/>
        <end position="100"/>
    </location>
</feature>
<feature type="transmembrane region" description="Helical" evidence="1">
    <location>
        <begin position="105"/>
        <end position="125"/>
    </location>
</feature>
<feature type="binding site" evidence="1">
    <location>
        <position position="75"/>
    </location>
    <ligand>
        <name>Na(+)</name>
        <dbReference type="ChEBI" id="CHEBI:29101"/>
        <note>structural</note>
    </ligand>
</feature>
<feature type="binding site" evidence="1">
    <location>
        <position position="78"/>
    </location>
    <ligand>
        <name>Na(+)</name>
        <dbReference type="ChEBI" id="CHEBI:29101"/>
        <note>structural</note>
    </ligand>
</feature>
<proteinExistence type="evidence at protein level"/>
<geneLocation type="plasmid">
    <name>pAPEC-O1-ColBM</name>
</geneLocation>
<name>FLUC_ECOK1</name>
<organism>
    <name type="scientific">Escherichia coli O1:K1 / APEC</name>
    <dbReference type="NCBI Taxonomy" id="405955"/>
    <lineage>
        <taxon>Bacteria</taxon>
        <taxon>Pseudomonadati</taxon>
        <taxon>Pseudomonadota</taxon>
        <taxon>Gammaproteobacteria</taxon>
        <taxon>Enterobacterales</taxon>
        <taxon>Enterobacteriaceae</taxon>
        <taxon>Escherichia</taxon>
    </lineage>
</organism>
<comment type="function">
    <text evidence="1 2">Fluoride-specific ion channel (PubMed:23991286). Important for reducing fluoride concentration in the cell, thus reducing its toxicity (By similarity). Is highly specific for fluoride ions and cannot transport chloride ions (PubMed:23991286).</text>
</comment>
<comment type="catalytic activity">
    <reaction evidence="1 2">
        <text>fluoride(in) = fluoride(out)</text>
        <dbReference type="Rhea" id="RHEA:76159"/>
        <dbReference type="ChEBI" id="CHEBI:17051"/>
    </reaction>
    <physiologicalReaction direction="left-to-right" evidence="1 5">
        <dbReference type="Rhea" id="RHEA:76160"/>
    </physiologicalReaction>
</comment>
<comment type="activity regulation">
    <text evidence="1">Na(+) is not transported, but it plays an essential structural role and its presence is essential for fluoride channel function.</text>
</comment>
<comment type="subunit">
    <text evidence="2">Homodimer.</text>
</comment>
<comment type="subcellular location">
    <subcellularLocation>
        <location evidence="1">Cell inner membrane</location>
        <topology evidence="1 2">Multi-pass membrane protein</topology>
    </subcellularLocation>
    <text evidence="2">Exhibits a dual-topology architecture: the two subunits are oriented antiparallel to each other within the membrane.</text>
</comment>
<comment type="miscellaneous">
    <text evidence="2">Renamed the Fluc family to avoid confusion with the CLC-type F(-)/H(+) antiporters.</text>
</comment>
<comment type="similarity">
    <text evidence="1 4">Belongs to the fluoride channel Fluc/FEX (TC 1.A.43) family.</text>
</comment>
<evidence type="ECO:0000255" key="1">
    <source>
        <dbReference type="HAMAP-Rule" id="MF_00454"/>
    </source>
</evidence>
<evidence type="ECO:0000269" key="2">
    <source>
    </source>
</evidence>
<evidence type="ECO:0000303" key="3">
    <source>
    </source>
</evidence>
<evidence type="ECO:0000305" key="4"/>
<evidence type="ECO:0000305" key="5">
    <source>
    </source>
</evidence>
<evidence type="ECO:0000312" key="6">
    <source>
        <dbReference type="EMBL" id="ABD51745.1"/>
    </source>
</evidence>